<dbReference type="EMBL" id="CP000628">
    <property type="protein sequence ID" value="ACM27592.1"/>
    <property type="molecule type" value="Genomic_DNA"/>
</dbReference>
<dbReference type="RefSeq" id="WP_007701364.1">
    <property type="nucleotide sequence ID" value="NC_011985.1"/>
</dbReference>
<dbReference type="SMR" id="B9J9J0"/>
<dbReference type="STRING" id="311403.Arad_3697"/>
<dbReference type="KEGG" id="ara:Arad_3697"/>
<dbReference type="eggNOG" id="COG0632">
    <property type="taxonomic scope" value="Bacteria"/>
</dbReference>
<dbReference type="HOGENOM" id="CLU_087936_3_0_5"/>
<dbReference type="Proteomes" id="UP000001600">
    <property type="component" value="Chromosome 1"/>
</dbReference>
<dbReference type="GO" id="GO:0005737">
    <property type="term" value="C:cytoplasm"/>
    <property type="evidence" value="ECO:0007669"/>
    <property type="project" value="UniProtKB-SubCell"/>
</dbReference>
<dbReference type="GO" id="GO:0009379">
    <property type="term" value="C:Holliday junction helicase complex"/>
    <property type="evidence" value="ECO:0007669"/>
    <property type="project" value="InterPro"/>
</dbReference>
<dbReference type="GO" id="GO:0048476">
    <property type="term" value="C:Holliday junction resolvase complex"/>
    <property type="evidence" value="ECO:0007669"/>
    <property type="project" value="UniProtKB-UniRule"/>
</dbReference>
<dbReference type="GO" id="GO:0005524">
    <property type="term" value="F:ATP binding"/>
    <property type="evidence" value="ECO:0007669"/>
    <property type="project" value="InterPro"/>
</dbReference>
<dbReference type="GO" id="GO:0000400">
    <property type="term" value="F:four-way junction DNA binding"/>
    <property type="evidence" value="ECO:0007669"/>
    <property type="project" value="UniProtKB-UniRule"/>
</dbReference>
<dbReference type="GO" id="GO:0009378">
    <property type="term" value="F:four-way junction helicase activity"/>
    <property type="evidence" value="ECO:0007669"/>
    <property type="project" value="InterPro"/>
</dbReference>
<dbReference type="GO" id="GO:0006310">
    <property type="term" value="P:DNA recombination"/>
    <property type="evidence" value="ECO:0007669"/>
    <property type="project" value="UniProtKB-UniRule"/>
</dbReference>
<dbReference type="GO" id="GO:0006281">
    <property type="term" value="P:DNA repair"/>
    <property type="evidence" value="ECO:0007669"/>
    <property type="project" value="UniProtKB-UniRule"/>
</dbReference>
<dbReference type="CDD" id="cd14332">
    <property type="entry name" value="UBA_RuvA_C"/>
    <property type="match status" value="1"/>
</dbReference>
<dbReference type="Gene3D" id="1.10.150.20">
    <property type="entry name" value="5' to 3' exonuclease, C-terminal subdomain"/>
    <property type="match status" value="1"/>
</dbReference>
<dbReference type="Gene3D" id="1.10.8.10">
    <property type="entry name" value="DNA helicase RuvA subunit, C-terminal domain"/>
    <property type="match status" value="1"/>
</dbReference>
<dbReference type="Gene3D" id="2.40.50.140">
    <property type="entry name" value="Nucleic acid-binding proteins"/>
    <property type="match status" value="1"/>
</dbReference>
<dbReference type="HAMAP" id="MF_00031">
    <property type="entry name" value="DNA_HJ_migration_RuvA"/>
    <property type="match status" value="1"/>
</dbReference>
<dbReference type="InterPro" id="IPR013849">
    <property type="entry name" value="DNA_helicase_Holl-junc_RuvA_I"/>
</dbReference>
<dbReference type="InterPro" id="IPR012340">
    <property type="entry name" value="NA-bd_OB-fold"/>
</dbReference>
<dbReference type="InterPro" id="IPR000085">
    <property type="entry name" value="RuvA"/>
</dbReference>
<dbReference type="InterPro" id="IPR010994">
    <property type="entry name" value="RuvA_2-like"/>
</dbReference>
<dbReference type="InterPro" id="IPR011114">
    <property type="entry name" value="RuvA_C"/>
</dbReference>
<dbReference type="InterPro" id="IPR036267">
    <property type="entry name" value="RuvA_C_sf"/>
</dbReference>
<dbReference type="NCBIfam" id="TIGR00084">
    <property type="entry name" value="ruvA"/>
    <property type="match status" value="1"/>
</dbReference>
<dbReference type="Pfam" id="PF14520">
    <property type="entry name" value="HHH_5"/>
    <property type="match status" value="1"/>
</dbReference>
<dbReference type="Pfam" id="PF07499">
    <property type="entry name" value="RuvA_C"/>
    <property type="match status" value="1"/>
</dbReference>
<dbReference type="Pfam" id="PF01330">
    <property type="entry name" value="RuvA_N"/>
    <property type="match status" value="1"/>
</dbReference>
<dbReference type="SUPFAM" id="SSF46929">
    <property type="entry name" value="DNA helicase RuvA subunit, C-terminal domain"/>
    <property type="match status" value="1"/>
</dbReference>
<dbReference type="SUPFAM" id="SSF50249">
    <property type="entry name" value="Nucleic acid-binding proteins"/>
    <property type="match status" value="1"/>
</dbReference>
<dbReference type="SUPFAM" id="SSF47781">
    <property type="entry name" value="RuvA domain 2-like"/>
    <property type="match status" value="1"/>
</dbReference>
<sequence length="204" mass="21627">MIGKLKGTIEEIGEDYALVDVHGVCYVAYCSARTLSRLGSVGEACILFIETYVREDQIRLFGFMAVLEREWFNLLQTVQGVGAKVALALLSTLTPSELANAIALQDRTAVSRAPGVGPKVAMRIVTELKNKVPAFAGEATNIGFKQELGEGVAPAPVSDAVSALTNLGYSRDQAANAIAAAMKVAGDEADSAKLIRLGLKELSR</sequence>
<protein>
    <recommendedName>
        <fullName evidence="1">Holliday junction branch migration complex subunit RuvA</fullName>
    </recommendedName>
</protein>
<name>RUVA_RHIR8</name>
<reference key="1">
    <citation type="journal article" date="2009" name="J. Bacteriol.">
        <title>Genome sequences of three Agrobacterium biovars help elucidate the evolution of multichromosome genomes in bacteria.</title>
        <authorList>
            <person name="Slater S.C."/>
            <person name="Goldman B.S."/>
            <person name="Goodner B."/>
            <person name="Setubal J.C."/>
            <person name="Farrand S.K."/>
            <person name="Nester E.W."/>
            <person name="Burr T.J."/>
            <person name="Banta L."/>
            <person name="Dickerman A.W."/>
            <person name="Paulsen I."/>
            <person name="Otten L."/>
            <person name="Suen G."/>
            <person name="Welch R."/>
            <person name="Almeida N.F."/>
            <person name="Arnold F."/>
            <person name="Burton O.T."/>
            <person name="Du Z."/>
            <person name="Ewing A."/>
            <person name="Godsy E."/>
            <person name="Heisel S."/>
            <person name="Houmiel K.L."/>
            <person name="Jhaveri J."/>
            <person name="Lu J."/>
            <person name="Miller N.M."/>
            <person name="Norton S."/>
            <person name="Chen Q."/>
            <person name="Phoolcharoen W."/>
            <person name="Ohlin V."/>
            <person name="Ondrusek D."/>
            <person name="Pride N."/>
            <person name="Stricklin S.L."/>
            <person name="Sun J."/>
            <person name="Wheeler C."/>
            <person name="Wilson L."/>
            <person name="Zhu H."/>
            <person name="Wood D.W."/>
        </authorList>
    </citation>
    <scope>NUCLEOTIDE SEQUENCE [LARGE SCALE GENOMIC DNA]</scope>
    <source>
        <strain>K84 / ATCC BAA-868</strain>
    </source>
</reference>
<gene>
    <name evidence="1" type="primary">ruvA</name>
    <name type="ordered locus">Arad_3697</name>
</gene>
<organism>
    <name type="scientific">Rhizobium rhizogenes (strain K84 / ATCC BAA-868)</name>
    <name type="common">Agrobacterium radiobacter</name>
    <dbReference type="NCBI Taxonomy" id="311403"/>
    <lineage>
        <taxon>Bacteria</taxon>
        <taxon>Pseudomonadati</taxon>
        <taxon>Pseudomonadota</taxon>
        <taxon>Alphaproteobacteria</taxon>
        <taxon>Hyphomicrobiales</taxon>
        <taxon>Rhizobiaceae</taxon>
        <taxon>Rhizobium/Agrobacterium group</taxon>
        <taxon>Rhizobium</taxon>
    </lineage>
</organism>
<accession>B9J9J0</accession>
<comment type="function">
    <text evidence="1">The RuvA-RuvB-RuvC complex processes Holliday junction (HJ) DNA during genetic recombination and DNA repair, while the RuvA-RuvB complex plays an important role in the rescue of blocked DNA replication forks via replication fork reversal (RFR). RuvA specifically binds to HJ cruciform DNA, conferring on it an open structure. The RuvB hexamer acts as an ATP-dependent pump, pulling dsDNA into and through the RuvAB complex. HJ branch migration allows RuvC to scan DNA until it finds its consensus sequence, where it cleaves and resolves the cruciform DNA.</text>
</comment>
<comment type="subunit">
    <text evidence="1">Homotetramer. Forms an RuvA(8)-RuvB(12)-Holliday junction (HJ) complex. HJ DNA is sandwiched between 2 RuvA tetramers; dsDNA enters through RuvA and exits via RuvB. An RuvB hexamer assembles on each DNA strand where it exits the tetramer. Each RuvB hexamer is contacted by two RuvA subunits (via domain III) on 2 adjacent RuvB subunits; this complex drives branch migration. In the full resolvosome a probable DNA-RuvA(4)-RuvB(12)-RuvC(2) complex forms which resolves the HJ.</text>
</comment>
<comment type="subcellular location">
    <subcellularLocation>
        <location evidence="1">Cytoplasm</location>
    </subcellularLocation>
</comment>
<comment type="domain">
    <text evidence="1">Has three domains with a flexible linker between the domains II and III and assumes an 'L' shape. Domain III is highly mobile and contacts RuvB.</text>
</comment>
<comment type="similarity">
    <text evidence="1">Belongs to the RuvA family.</text>
</comment>
<keyword id="KW-0963">Cytoplasm</keyword>
<keyword id="KW-0227">DNA damage</keyword>
<keyword id="KW-0233">DNA recombination</keyword>
<keyword id="KW-0234">DNA repair</keyword>
<keyword id="KW-0238">DNA-binding</keyword>
<feature type="chain" id="PRO_1000195106" description="Holliday junction branch migration complex subunit RuvA">
    <location>
        <begin position="1"/>
        <end position="204"/>
    </location>
</feature>
<feature type="region of interest" description="Domain I" evidence="1">
    <location>
        <begin position="1"/>
        <end position="64"/>
    </location>
</feature>
<feature type="region of interest" description="Domain II" evidence="1">
    <location>
        <begin position="65"/>
        <end position="143"/>
    </location>
</feature>
<feature type="region of interest" description="Flexible linker" evidence="1">
    <location>
        <begin position="144"/>
        <end position="151"/>
    </location>
</feature>
<feature type="region of interest" description="Domain III" evidence="1">
    <location>
        <begin position="152"/>
        <end position="204"/>
    </location>
</feature>
<proteinExistence type="inferred from homology"/>
<evidence type="ECO:0000255" key="1">
    <source>
        <dbReference type="HAMAP-Rule" id="MF_00031"/>
    </source>
</evidence>